<keyword id="KW-0002">3D-structure</keyword>
<keyword id="KW-0007">Acetylation</keyword>
<keyword id="KW-0009">Actin-binding</keyword>
<keyword id="KW-0025">Alternative splicing</keyword>
<keyword id="KW-0122">Cardiomyopathy</keyword>
<keyword id="KW-0130">Cell adhesion</keyword>
<keyword id="KW-0965">Cell junction</keyword>
<keyword id="KW-1003">Cell membrane</keyword>
<keyword id="KW-0966">Cell projection</keyword>
<keyword id="KW-0963">Cytoplasm</keyword>
<keyword id="KW-0206">Cytoskeleton</keyword>
<keyword id="KW-0903">Direct protein sequencing</keyword>
<keyword id="KW-0225">Disease variant</keyword>
<keyword id="KW-0449">Lipoprotein</keyword>
<keyword id="KW-0472">Membrane</keyword>
<keyword id="KW-0564">Palmitate</keyword>
<keyword id="KW-0597">Phosphoprotein</keyword>
<keyword id="KW-1267">Proteomics identification</keyword>
<keyword id="KW-1185">Reference proteome</keyword>
<keyword id="KW-0677">Repeat</keyword>
<name>VINC_HUMAN</name>
<protein>
    <recommendedName>
        <fullName>Vinculin</fullName>
    </recommendedName>
    <alternativeName>
        <fullName>Metavinculin</fullName>
        <shortName>MV</shortName>
    </alternativeName>
</protein>
<organism>
    <name type="scientific">Homo sapiens</name>
    <name type="common">Human</name>
    <dbReference type="NCBI Taxonomy" id="9606"/>
    <lineage>
        <taxon>Eukaryota</taxon>
        <taxon>Metazoa</taxon>
        <taxon>Chordata</taxon>
        <taxon>Craniata</taxon>
        <taxon>Vertebrata</taxon>
        <taxon>Euteleostomi</taxon>
        <taxon>Mammalia</taxon>
        <taxon>Eutheria</taxon>
        <taxon>Euarchontoglires</taxon>
        <taxon>Primates</taxon>
        <taxon>Haplorrhini</taxon>
        <taxon>Catarrhini</taxon>
        <taxon>Hominidae</taxon>
        <taxon>Homo</taxon>
    </lineage>
</organism>
<accession>P18206</accession>
<accession>Q16450</accession>
<accession>Q5SWX2</accession>
<accession>Q7Z3B8</accession>
<accession>Q8IXU7</accession>
<reference key="1">
    <citation type="journal article" date="1990" name="Proc. Natl. Acad. Sci. U.S.A.">
        <title>Complete sequence of human vinculin and assignment of the gene to chromosome 10.</title>
        <authorList>
            <person name="Weller P.A."/>
            <person name="Ogryzko E.P."/>
            <person name="Corben E.B."/>
            <person name="Zhidkova N.I."/>
            <person name="Patel B."/>
            <person name="Price G.J."/>
            <person name="Spurr N.K."/>
            <person name="Koteliansky V.E."/>
            <person name="Critchley D.R."/>
        </authorList>
    </citation>
    <scope>NUCLEOTIDE SEQUENCE [MRNA] (ISOFORM 1)</scope>
    <source>
        <tissue>Endothelial cell</tissue>
    </source>
</reference>
<reference key="2">
    <citation type="journal article" date="2007" name="BMC Genomics">
        <title>The full-ORF clone resource of the German cDNA consortium.</title>
        <authorList>
            <person name="Bechtel S."/>
            <person name="Rosenfelder H."/>
            <person name="Duda A."/>
            <person name="Schmidt C.P."/>
            <person name="Ernst U."/>
            <person name="Wellenreuther R."/>
            <person name="Mehrle A."/>
            <person name="Schuster C."/>
            <person name="Bahr A."/>
            <person name="Bloecker H."/>
            <person name="Heubner D."/>
            <person name="Hoerlein A."/>
            <person name="Michel G."/>
            <person name="Wedler H."/>
            <person name="Koehrer K."/>
            <person name="Ottenwaelder B."/>
            <person name="Poustka A."/>
            <person name="Wiemann S."/>
            <person name="Schupp I."/>
        </authorList>
    </citation>
    <scope>NUCLEOTIDE SEQUENCE [LARGE SCALE MRNA] (ISOFORM 3)</scope>
    <source>
        <tissue>Retina</tissue>
    </source>
</reference>
<reference key="3">
    <citation type="journal article" date="2004" name="Nature">
        <title>The DNA sequence and comparative analysis of human chromosome 10.</title>
        <authorList>
            <person name="Deloukas P."/>
            <person name="Earthrowl M.E."/>
            <person name="Grafham D.V."/>
            <person name="Rubenfield M."/>
            <person name="French L."/>
            <person name="Steward C.A."/>
            <person name="Sims S.K."/>
            <person name="Jones M.C."/>
            <person name="Searle S."/>
            <person name="Scott C."/>
            <person name="Howe K."/>
            <person name="Hunt S.E."/>
            <person name="Andrews T.D."/>
            <person name="Gilbert J.G.R."/>
            <person name="Swarbreck D."/>
            <person name="Ashurst J.L."/>
            <person name="Taylor A."/>
            <person name="Battles J."/>
            <person name="Bird C.P."/>
            <person name="Ainscough R."/>
            <person name="Almeida J.P."/>
            <person name="Ashwell R.I.S."/>
            <person name="Ambrose K.D."/>
            <person name="Babbage A.K."/>
            <person name="Bagguley C.L."/>
            <person name="Bailey J."/>
            <person name="Banerjee R."/>
            <person name="Bates K."/>
            <person name="Beasley H."/>
            <person name="Bray-Allen S."/>
            <person name="Brown A.J."/>
            <person name="Brown J.Y."/>
            <person name="Burford D.C."/>
            <person name="Burrill W."/>
            <person name="Burton J."/>
            <person name="Cahill P."/>
            <person name="Camire D."/>
            <person name="Carter N.P."/>
            <person name="Chapman J.C."/>
            <person name="Clark S.Y."/>
            <person name="Clarke G."/>
            <person name="Clee C.M."/>
            <person name="Clegg S."/>
            <person name="Corby N."/>
            <person name="Coulson A."/>
            <person name="Dhami P."/>
            <person name="Dutta I."/>
            <person name="Dunn M."/>
            <person name="Faulkner L."/>
            <person name="Frankish A."/>
            <person name="Frankland J.A."/>
            <person name="Garner P."/>
            <person name="Garnett J."/>
            <person name="Gribble S."/>
            <person name="Griffiths C."/>
            <person name="Grocock R."/>
            <person name="Gustafson E."/>
            <person name="Hammond S."/>
            <person name="Harley J.L."/>
            <person name="Hart E."/>
            <person name="Heath P.D."/>
            <person name="Ho T.P."/>
            <person name="Hopkins B."/>
            <person name="Horne J."/>
            <person name="Howden P.J."/>
            <person name="Huckle E."/>
            <person name="Hynds C."/>
            <person name="Johnson C."/>
            <person name="Johnson D."/>
            <person name="Kana A."/>
            <person name="Kay M."/>
            <person name="Kimberley A.M."/>
            <person name="Kershaw J.K."/>
            <person name="Kokkinaki M."/>
            <person name="Laird G.K."/>
            <person name="Lawlor S."/>
            <person name="Lee H.M."/>
            <person name="Leongamornlert D.A."/>
            <person name="Laird G."/>
            <person name="Lloyd C."/>
            <person name="Lloyd D.M."/>
            <person name="Loveland J."/>
            <person name="Lovell J."/>
            <person name="McLaren S."/>
            <person name="McLay K.E."/>
            <person name="McMurray A."/>
            <person name="Mashreghi-Mohammadi M."/>
            <person name="Matthews L."/>
            <person name="Milne S."/>
            <person name="Nickerson T."/>
            <person name="Nguyen M."/>
            <person name="Overton-Larty E."/>
            <person name="Palmer S.A."/>
            <person name="Pearce A.V."/>
            <person name="Peck A.I."/>
            <person name="Pelan S."/>
            <person name="Phillimore B."/>
            <person name="Porter K."/>
            <person name="Rice C.M."/>
            <person name="Rogosin A."/>
            <person name="Ross M.T."/>
            <person name="Sarafidou T."/>
            <person name="Sehra H.K."/>
            <person name="Shownkeen R."/>
            <person name="Skuce C.D."/>
            <person name="Smith M."/>
            <person name="Standring L."/>
            <person name="Sycamore N."/>
            <person name="Tester J."/>
            <person name="Thorpe A."/>
            <person name="Torcasso W."/>
            <person name="Tracey A."/>
            <person name="Tromans A."/>
            <person name="Tsolas J."/>
            <person name="Wall M."/>
            <person name="Walsh J."/>
            <person name="Wang H."/>
            <person name="Weinstock K."/>
            <person name="West A.P."/>
            <person name="Willey D.L."/>
            <person name="Whitehead S.L."/>
            <person name="Wilming L."/>
            <person name="Wray P.W."/>
            <person name="Young L."/>
            <person name="Chen Y."/>
            <person name="Lovering R.C."/>
            <person name="Moschonas N.K."/>
            <person name="Siebert R."/>
            <person name="Fechtel K."/>
            <person name="Bentley D."/>
            <person name="Durbin R.M."/>
            <person name="Hubbard T."/>
            <person name="Doucette-Stamm L."/>
            <person name="Beck S."/>
            <person name="Smith D.R."/>
            <person name="Rogers J."/>
        </authorList>
    </citation>
    <scope>NUCLEOTIDE SEQUENCE [LARGE SCALE GENOMIC DNA]</scope>
</reference>
<reference key="4">
    <citation type="journal article" date="2004" name="Genome Res.">
        <title>The status, quality, and expansion of the NIH full-length cDNA project: the Mammalian Gene Collection (MGC).</title>
        <authorList>
            <consortium name="The MGC Project Team"/>
        </authorList>
    </citation>
    <scope>NUCLEOTIDE SEQUENCE [LARGE SCALE MRNA] (ISOFORM 1)</scope>
    <scope>VARIANT LEU-234</scope>
    <source>
        <tissue>Prostate</tissue>
    </source>
</reference>
<reference key="5">
    <citation type="journal article" date="1993" name="J. Biol. Chem.">
        <title>Organization of the human gene encoding the cytoskeletal protein vinculin and the sequence of the vinculin promoter.</title>
        <authorList>
            <person name="Moiseyeva E.P."/>
            <person name="Weller P.A."/>
            <person name="Zhidkova N.I."/>
            <person name="Corben E.B."/>
            <person name="Patel B."/>
            <person name="Jasinska I."/>
            <person name="Koteliansky V.E."/>
            <person name="Critchley D.R."/>
        </authorList>
    </citation>
    <scope>NUCLEOTIDE SEQUENCE [GENOMIC DNA] OF 1-56</scope>
    <scope>ALTERNATIVE SPLICING (ISOFORMS 1 AND 2)</scope>
</reference>
<reference key="6">
    <citation type="submission" date="2008-12" db="UniProtKB">
        <authorList>
            <person name="Lubec G."/>
            <person name="Chen W.-Q."/>
            <person name="Sun Y."/>
        </authorList>
    </citation>
    <scope>PROTEIN SEQUENCE OF 114-132; 247-261; 327-339; 353-366; 465-476 AND 548-561</scope>
    <scope>IDENTIFICATION BY MASS SPECTROMETRY</scope>
    <source>
        <tissue>Fetal brain cortex</tissue>
    </source>
</reference>
<reference key="7">
    <citation type="journal article" date="1992" name="Eur. J. Biochem.">
        <title>An additional exon in the human vinculin gene specifically encodes meta-vinculin-specific difference peptide. Cross-species comparison reveals variable and conserved motifs in the meta-vinculin insert.</title>
        <authorList>
            <person name="Koteliansky V.E."/>
            <person name="Ogryzko E.P."/>
            <person name="Zhidkova N.I."/>
            <person name="Weller P.A."/>
            <person name="Critchley D.R."/>
            <person name="Vancompernolle K."/>
            <person name="Vandekerckhove J."/>
            <person name="Strasser P."/>
            <person name="Way M."/>
            <person name="Gimona M."/>
            <person name="Small J.V."/>
        </authorList>
    </citation>
    <scope>NUCLEOTIDE SEQUENCE [GENOMIC DNA] OF 854-1051</scope>
    <scope>ALTERNATIVE SPLICING (ISOFORM 2)</scope>
    <source>
        <tissue>Uterus</tissue>
    </source>
</reference>
<reference key="8">
    <citation type="journal article" date="2003" name="Nat. Biotechnol.">
        <title>Exploring proteomes and analyzing protein processing by mass spectrometric identification of sorted N-terminal peptides.</title>
        <authorList>
            <person name="Gevaert K."/>
            <person name="Goethals M."/>
            <person name="Martens L."/>
            <person name="Van Damme J."/>
            <person name="Staes A."/>
            <person name="Thomas G.R."/>
            <person name="Vandekerckhove J."/>
        </authorList>
    </citation>
    <scope>PROTEIN SEQUENCE OF 2-7 (ISOFORMS 1/2)</scope>
    <source>
        <tissue>Platelet</tissue>
    </source>
</reference>
<reference key="9">
    <citation type="journal article" date="1996" name="J. Biol. Chem.">
        <title>Functional analysis of Shigella VirG domains essential for interaction with vinculin and actin-based motility.</title>
        <authorList>
            <person name="Suzuki T."/>
            <person name="Saga S."/>
            <person name="Sasakawa C."/>
        </authorList>
    </citation>
    <scope>INTERACTION WITH S.FLEXNERI ICSA (MICROBIAL INFECTION)</scope>
</reference>
<reference key="10">
    <citation type="journal article" date="2004" name="Mol. Biol. Cell">
        <title>The phosphorylation of vinculin on tyrosine residues 100 and 1065, mediated by SRC kinases, affects cell spreading.</title>
        <authorList>
            <person name="Zhang Z."/>
            <person name="Izaguirre G."/>
            <person name="Lin S.-Y."/>
            <person name="Lee H.Y."/>
            <person name="Schaefer E."/>
            <person name="Haimovich B."/>
        </authorList>
    </citation>
    <scope>PHOSPHORYLATION AT TYR-1133</scope>
    <scope>IDENTIFICATION BY MASS SPECTROMETRY</scope>
</reference>
<reference key="11">
    <citation type="journal article" date="2006" name="Cell">
        <title>Global, in vivo, and site-specific phosphorylation dynamics in signaling networks.</title>
        <authorList>
            <person name="Olsen J.V."/>
            <person name="Blagoev B."/>
            <person name="Gnad F."/>
            <person name="Macek B."/>
            <person name="Kumar C."/>
            <person name="Mortensen P."/>
            <person name="Mann M."/>
        </authorList>
    </citation>
    <scope>PHOSPHORYLATION [LARGE SCALE ANALYSIS] AT SER-721</scope>
    <scope>IDENTIFICATION BY MASS SPECTROMETRY [LARGE SCALE ANALYSIS]</scope>
    <source>
        <tissue>Cervix carcinoma</tissue>
    </source>
</reference>
<reference key="12">
    <citation type="journal article" date="2008" name="Biochem. J.">
        <title>Human alpha-synemin interacts directly with vinculin and metavinculin.</title>
        <authorList>
            <person name="Sun N."/>
            <person name="Critchley D.R."/>
            <person name="Paulin D."/>
            <person name="Li Z."/>
            <person name="Robson R.M."/>
        </authorList>
    </citation>
    <scope>INTERACTION WITH SYNM</scope>
</reference>
<reference key="13">
    <citation type="journal article" date="2008" name="Proc. Natl. Acad. Sci. U.S.A.">
        <title>A quantitative atlas of mitotic phosphorylation.</title>
        <authorList>
            <person name="Dephoure N."/>
            <person name="Zhou C."/>
            <person name="Villen J."/>
            <person name="Beausoleil S.A."/>
            <person name="Bakalarski C.E."/>
            <person name="Elledge S.J."/>
            <person name="Gygi S.P."/>
        </authorList>
    </citation>
    <scope>PHOSPHORYLATION [LARGE SCALE ANALYSIS] AT SER-290; SER-721 AND TYR-822</scope>
    <scope>IDENTIFICATION BY MASS SPECTROMETRY [LARGE SCALE ANALYSIS]</scope>
    <source>
        <tissue>Cervix carcinoma</tissue>
    </source>
</reference>
<reference key="14">
    <citation type="journal article" date="2009" name="Science">
        <title>Lysine acetylation targets protein complexes and co-regulates major cellular functions.</title>
        <authorList>
            <person name="Choudhary C."/>
            <person name="Kumar C."/>
            <person name="Gnad F."/>
            <person name="Nielsen M.L."/>
            <person name="Rehman M."/>
            <person name="Walther T.C."/>
            <person name="Olsen J.V."/>
            <person name="Mann M."/>
        </authorList>
    </citation>
    <scope>ACETYLATION [LARGE SCALE ANALYSIS] AT LYS-173 AND LYS-496</scope>
    <scope>IDENTIFICATION BY MASS SPECTROMETRY [LARGE SCALE ANALYSIS]</scope>
</reference>
<reference key="15">
    <citation type="journal article" date="2010" name="J. Biol. Chem.">
        <title>Vinculin is a dually regulated actin filament barbed end-capping and side-binding protein.</title>
        <authorList>
            <person name="Le Clainche C."/>
            <person name="Dwivedi S.P."/>
            <person name="Didry D."/>
            <person name="Carlier M.F."/>
        </authorList>
    </citation>
    <scope>FUNCTION</scope>
    <scope>DOMAIN</scope>
</reference>
<reference key="16">
    <citation type="journal article" date="2010" name="Sci. Signal.">
        <title>Quantitative phosphoproteomics reveals widespread full phosphorylation site occupancy during mitosis.</title>
        <authorList>
            <person name="Olsen J.V."/>
            <person name="Vermeulen M."/>
            <person name="Santamaria A."/>
            <person name="Kumar C."/>
            <person name="Miller M.L."/>
            <person name="Jensen L.J."/>
            <person name="Gnad F."/>
            <person name="Cox J."/>
            <person name="Jensen T.S."/>
            <person name="Nigg E.A."/>
            <person name="Brunak S."/>
            <person name="Mann M."/>
        </authorList>
    </citation>
    <scope>PHOSPHORYLATION [LARGE SCALE ANALYSIS] AT SER-288; SER-290 AND SER-721</scope>
    <scope>IDENTIFICATION BY MASS SPECTROMETRY [LARGE SCALE ANALYSIS]</scope>
    <source>
        <tissue>Cervix carcinoma</tissue>
    </source>
</reference>
<reference key="17">
    <citation type="journal article" date="2011" name="BMC Syst. Biol.">
        <title>Initial characterization of the human central proteome.</title>
        <authorList>
            <person name="Burkard T.R."/>
            <person name="Planyavsky M."/>
            <person name="Kaupe I."/>
            <person name="Breitwieser F.P."/>
            <person name="Buerckstuemmer T."/>
            <person name="Bennett K.L."/>
            <person name="Superti-Furga G."/>
            <person name="Colinge J."/>
        </authorList>
    </citation>
    <scope>IDENTIFICATION BY MASS SPECTROMETRY [LARGE SCALE ANALYSIS]</scope>
</reference>
<reference key="18">
    <citation type="journal article" date="2011" name="Sci. Signal.">
        <title>System-wide temporal characterization of the proteome and phosphoproteome of human embryonic stem cell differentiation.</title>
        <authorList>
            <person name="Rigbolt K.T."/>
            <person name="Prokhorova T.A."/>
            <person name="Akimov V."/>
            <person name="Henningsen J."/>
            <person name="Johansen P.T."/>
            <person name="Kratchmarova I."/>
            <person name="Kassem M."/>
            <person name="Mann M."/>
            <person name="Olsen J.V."/>
            <person name="Blagoev B."/>
        </authorList>
    </citation>
    <scope>PHOSPHORYLATION [LARGE SCALE ANALYSIS] AT SER-290; SER-346; SER-434 AND SER-721</scope>
    <scope>IDENTIFICATION BY MASS SPECTROMETRY [LARGE SCALE ANALYSIS]</scope>
</reference>
<reference key="19">
    <citation type="journal article" date="2012" name="J. Cell Biol.">
        <title>The C-terminal tail domain of metavinculin, vinculin's splice variant, severs actin filaments.</title>
        <authorList>
            <person name="Janssen M.E."/>
            <person name="Liu H."/>
            <person name="Volkmann N."/>
            <person name="Hanein D."/>
        </authorList>
    </citation>
    <scope>FUNCTION (ISOFORM 2)</scope>
</reference>
<reference key="20">
    <citation type="journal article" date="2013" name="J. Proteome Res.">
        <title>Toward a comprehensive characterization of a human cancer cell phosphoproteome.</title>
        <authorList>
            <person name="Zhou H."/>
            <person name="Di Palma S."/>
            <person name="Preisinger C."/>
            <person name="Peng M."/>
            <person name="Polat A.N."/>
            <person name="Heck A.J."/>
            <person name="Mohammed S."/>
        </authorList>
    </citation>
    <scope>PHOSPHORYLATION [LARGE SCALE ANALYSIS] AT SER-288; THR-672 AND SER-721</scope>
    <scope>IDENTIFICATION BY MASS SPECTROMETRY [LARGE SCALE ANALYSIS]</scope>
    <source>
        <tissue>Cervix carcinoma</tissue>
        <tissue>Erythroleukemia</tissue>
    </source>
</reference>
<reference key="21">
    <citation type="journal article" date="2014" name="J. Proteomics">
        <title>An enzyme assisted RP-RPLC approach for in-depth analysis of human liver phosphoproteome.</title>
        <authorList>
            <person name="Bian Y."/>
            <person name="Song C."/>
            <person name="Cheng K."/>
            <person name="Dong M."/>
            <person name="Wang F."/>
            <person name="Huang J."/>
            <person name="Sun D."/>
            <person name="Wang L."/>
            <person name="Ye M."/>
            <person name="Zou H."/>
        </authorList>
    </citation>
    <scope>PHOSPHORYLATION [LARGE SCALE ANALYSIS] AT SER-260; SER-275; SER-288; SER-290; SER-346; SER-579; SER-600; THR-604; SER-721; SER-795 AND SER-809</scope>
    <scope>IDENTIFICATION BY MASS SPECTROMETRY [LARGE SCALE ANALYSIS]</scope>
    <source>
        <tissue>Liver</tissue>
    </source>
</reference>
<reference key="22">
    <citation type="journal article" date="2015" name="Proteomics">
        <title>N-terminome analysis of the human mitochondrial proteome.</title>
        <authorList>
            <person name="Vaca Jacome A.S."/>
            <person name="Rabilloud T."/>
            <person name="Schaeffer-Reiss C."/>
            <person name="Rompais M."/>
            <person name="Ayoub D."/>
            <person name="Lane L."/>
            <person name="Bairoch A."/>
            <person name="Van Dorsselaer A."/>
            <person name="Carapito C."/>
        </authorList>
    </citation>
    <scope>IDENTIFICATION BY MASS SPECTROMETRY [LARGE SCALE ANALYSIS]</scope>
</reference>
<reference key="23">
    <citation type="journal article" date="2016" name="Nat. Genet.">
        <title>Mutations in CTNNA1 cause butterfly-shaped pigment dystrophy and perturbed retinal pigment epithelium integrity.</title>
        <authorList>
            <person name="Saksens N.T."/>
            <person name="Krebs M.P."/>
            <person name="Schoenmaker-Koller F.E."/>
            <person name="Hicks W."/>
            <person name="Yu M."/>
            <person name="Shi L."/>
            <person name="Rowe L."/>
            <person name="Collin G.B."/>
            <person name="Charette J.R."/>
            <person name="Letteboer S.J."/>
            <person name="Neveling K."/>
            <person name="van Moorsel T.W."/>
            <person name="Abu-Ltaif S."/>
            <person name="De Baere E."/>
            <person name="Walraedt S."/>
            <person name="Banfi S."/>
            <person name="Simonelli F."/>
            <person name="Cremers F.P."/>
            <person name="Boon C.J."/>
            <person name="Roepman R."/>
            <person name="Leroy B.P."/>
            <person name="Peachey N.S."/>
            <person name="Hoyng C.B."/>
            <person name="Nishina P.M."/>
            <person name="den Hollander A.I."/>
        </authorList>
    </citation>
    <scope>INTERACTION WITH CTNNA1</scope>
</reference>
<reference key="24">
    <citation type="journal article" date="2017" name="Cell. Physiol. Biochem.">
        <title>The Intracranial Aneurysm Gene THSD1 Connects Endosome Dynamics to Nascent Focal Adhesion Assembly.</title>
        <authorList>
            <person name="Rui Y.N."/>
            <person name="Xu Z."/>
            <person name="Fang X."/>
            <person name="Menezes M.R."/>
            <person name="Balzeau J."/>
            <person name="Niu A."/>
            <person name="Hagan J.P."/>
            <person name="Kim D.H."/>
        </authorList>
    </citation>
    <scope>SUBUNIT</scope>
</reference>
<reference key="25">
    <citation type="journal article" date="2004" name="J. Biol. Chem.">
        <title>Structural basis for amplifying vinculin activation by talin.</title>
        <authorList>
            <person name="Izard T."/>
            <person name="Vonrhein C."/>
        </authorList>
    </citation>
    <scope>X-RAY CRYSTALLOGRAPHY (2.42 ANGSTROMS) OF 1-258 IN COMPLEX WITH TLN1</scope>
</reference>
<reference key="26">
    <citation type="journal article" date="2004" name="Nature">
        <title>Vinculin activation by talin through helical bundle conversion.</title>
        <authorList>
            <person name="Izard T."/>
            <person name="Evans G."/>
            <person name="Borgon R.A."/>
            <person name="Rush C.L."/>
            <person name="Bricogne G."/>
            <person name="Bois P.R.J."/>
        </authorList>
    </citation>
    <scope>X-RAY CRYSTALLOGRAPHY (2.35 ANGSTROMS) OF 1-258 IN COMPLEX WITH TLN1</scope>
</reference>
<reference key="27">
    <citation type="journal article" date="2005" name="Mol. Cell. Biol.">
        <title>Structural dynamics of alpha-actinin-vinculin interactions.</title>
        <authorList>
            <person name="Bois P.R.J."/>
            <person name="Borgon R.A."/>
            <person name="Vonrhein C."/>
            <person name="Izard T."/>
        </authorList>
    </citation>
    <scope>X-RAY CRYSTALLOGRAPHY (1.80 ANGSTROMS) OF 1-258 IN COMPLEX WITH ACTN4</scope>
    <scope>INTERACTION WITH ACTN4</scope>
</reference>
<reference key="28">
    <citation type="journal article" date="2002" name="Circulation">
        <title>Metavinculin mutations alter actin interaction in dilated cardiomyopathy.</title>
        <authorList>
            <person name="Olson T.M."/>
            <person name="Illenberger S."/>
            <person name="Kishimoto N.Y."/>
            <person name="Huttelmaier S."/>
            <person name="Keating M.T."/>
            <person name="Jockusch B.M."/>
        </authorList>
    </citation>
    <scope>VARIANTS CMD1W LEU-954 DEL AND TRP-975</scope>
    <scope>CHARACTERIZATION OF VARIANT CMD1W TRP-975</scope>
</reference>
<reference key="29">
    <citation type="journal article" date="2006" name="Mol. Genet. Metab.">
        <title>Identification of a metavinculin missense mutation, R975W, associated with both hypertrophic and dilated cardiomyopathy.</title>
        <authorList>
            <person name="Vasile V.C."/>
            <person name="Will M.L."/>
            <person name="Ommen S.R."/>
            <person name="Edwards W.D."/>
            <person name="Olson T.M."/>
            <person name="Ackerman M.J."/>
        </authorList>
    </citation>
    <scope>VARIANT CMD1W TRP-975</scope>
    <scope>VARIANTS VAL-934 AND ALA-943</scope>
</reference>
<reference key="30">
    <citation type="journal article" date="2006" name="Biochem. Biophys. Res. Commun.">
        <title>A missense mutation in a ubiquitously expressed protein, vinculin, confers susceptibility to hypertrophic cardiomyopathy.</title>
        <authorList>
            <person name="Vasile V.C."/>
            <person name="Ommen S.R."/>
            <person name="Edwards W.D."/>
            <person name="Ackerman M.J."/>
        </authorList>
    </citation>
    <scope>VARIANT CMH15 MET-277</scope>
</reference>
<comment type="function">
    <text evidence="15">Actin filament (F-actin)-binding protein involved in cell-matrix adhesion and cell-cell adhesion. Regulates cell-surface E-cadherin expression and potentiates mechanosensing by the E-cadherin complex. May also play important roles in cell morphology and locomotion.</text>
</comment>
<comment type="subunit">
    <text evidence="1 3 7 8 11 14 16 17">Exhibits self-association properties. Part of a complex composed of THSD1, PTK2/FAK1, TLN1 and VCL (PubMed:29069646). Interacts with APBB1IP and NRAP (By similarity). Interacts with TLN1. Interacts with CTNNB1 and this interaction is necessary for its localization to the cell-cell junctions and for its function in regulating cell surface expression of E-cadherin (By similarity). Interacts with SYNM. Interacts with SORBS1 (By similarity). Interacts with CTNNA1 (PubMed:26691986). Binds to ACTN4; this interaction triggers conformational changes (PubMed:15988023). Interacts with FLII (By similarity).</text>
</comment>
<comment type="subunit">
    <text evidence="18">(Microbial infection) Interacts via its globular head domain with the central portion of S.flexneri IcsA (also called VirG).</text>
</comment>
<comment type="interaction">
    <interactant intactId="EBI-716775">
        <id>P18206</id>
    </interactant>
    <interactant intactId="EBI-743598">
        <id>Q9NYB9</id>
        <label>ABI2</label>
    </interactant>
    <organismsDiffer>false</organismsDiffer>
    <experiments>3</experiments>
</comment>
<comment type="interaction">
    <interactant intactId="EBI-716775">
        <id>P18206</id>
    </interactant>
    <interactant intactId="EBI-352356">
        <id>O15144</id>
        <label>ARPC2</label>
    </interactant>
    <organismsDiffer>false</organismsDiffer>
    <experiments>2</experiments>
</comment>
<comment type="interaction">
    <interactant intactId="EBI-716775">
        <id>P18206</id>
    </interactant>
    <interactant intactId="EBI-10180409">
        <id>Q969V4</id>
        <label>TEKT1</label>
    </interactant>
    <organismsDiffer>false</organismsDiffer>
    <experiments>3</experiments>
</comment>
<comment type="interaction">
    <interactant intactId="EBI-716775">
        <id>P18206</id>
    </interactant>
    <interactant intactId="EBI-7640410">
        <id>P18010</id>
        <label>ipaA</label>
    </interactant>
    <organismsDiffer>true</organismsDiffer>
    <experiments>7</experiments>
</comment>
<comment type="interaction">
    <interactant intactId="EBI-716775">
        <id>P18206</id>
    </interactant>
    <interactant intactId="EBI-7255868">
        <id>Q6XVZ2</id>
        <label>ipaA</label>
    </interactant>
    <organismsDiffer>true</organismsDiffer>
    <experiments>4</experiments>
</comment>
<comment type="interaction">
    <interactant intactId="EBI-716775">
        <id>P18206</id>
    </interactant>
    <interactant intactId="EBI-26356597">
        <id>B0BXR4</id>
        <label>RrIowa_0797</label>
    </interactant>
    <organismsDiffer>true</organismsDiffer>
    <experiments>6</experiments>
</comment>
<comment type="interaction">
    <interactant intactId="EBI-716775">
        <id>P18206</id>
    </interactant>
    <interactant intactId="EBI-7072893">
        <id>Q62417-2</id>
        <label>Sorbs1</label>
    </interactant>
    <organismsDiffer>true</organismsDiffer>
    <experiments>3</experiments>
</comment>
<comment type="interaction">
    <interactant intactId="EBI-11027067">
        <id>P18206-2</id>
    </interactant>
    <interactant intactId="EBI-702093">
        <id>P56945</id>
        <label>BCAR1</label>
    </interactant>
    <organismsDiffer>false</organismsDiffer>
    <experiments>3</experiments>
</comment>
<comment type="interaction">
    <interactant intactId="EBI-11027067">
        <id>P18206-2</id>
    </interactant>
    <interactant intactId="EBI-701918">
        <id>P35221</id>
        <label>CTNNA1</label>
    </interactant>
    <organismsDiffer>false</organismsDiffer>
    <experiments>2</experiments>
</comment>
<comment type="interaction">
    <interactant intactId="EBI-11027067">
        <id>P18206-2</id>
    </interactant>
    <interactant intactId="EBI-400434">
        <id>P35637</id>
        <label>FUS</label>
    </interactant>
    <organismsDiffer>false</organismsDiffer>
    <experiments>3</experiments>
</comment>
<comment type="interaction">
    <interactant intactId="EBI-11027067">
        <id>P18206-2</id>
    </interactant>
    <interactant intactId="EBI-744222">
        <id>O60711</id>
        <label>LPXN</label>
    </interactant>
    <organismsDiffer>false</organismsDiffer>
    <experiments>3</experiments>
</comment>
<comment type="interaction">
    <interactant intactId="EBI-11027067">
        <id>P18206-2</id>
    </interactant>
    <interactant intactId="EBI-2880203">
        <id>O76041</id>
        <label>NEBL</label>
    </interactant>
    <organismsDiffer>false</organismsDiffer>
    <experiments>3</experiments>
</comment>
<comment type="interaction">
    <interactant intactId="EBI-11027067">
        <id>P18206-2</id>
    </interactant>
    <interactant intactId="EBI-748974">
        <id>Q96CV9</id>
        <label>OPTN</label>
    </interactant>
    <organismsDiffer>false</organismsDiffer>
    <experiments>3</experiments>
</comment>
<comment type="interaction">
    <interactant intactId="EBI-11027067">
        <id>P18206-2</id>
    </interactant>
    <interactant intactId="EBI-21251460">
        <id>O60260-5</id>
        <label>PRKN</label>
    </interactant>
    <organismsDiffer>false</organismsDiffer>
    <experiments>6</experiments>
</comment>
<comment type="interaction">
    <interactant intactId="EBI-11027067">
        <id>P18206-2</id>
    </interactant>
    <interactant intactId="EBI-15788272">
        <id>Q8IY67-1</id>
        <label>RAVER1</label>
    </interactant>
    <organismsDiffer>false</organismsDiffer>
    <experiments>3</experiments>
</comment>
<comment type="interaction">
    <interactant intactId="EBI-11027067">
        <id>P18206-2</id>
    </interactant>
    <interactant intactId="EBI-2561646">
        <id>Q86UD0</id>
        <label>SAPCD2</label>
    </interactant>
    <organismsDiffer>false</organismsDiffer>
    <experiments>3</experiments>
</comment>
<comment type="interaction">
    <interactant intactId="EBI-11027067">
        <id>P18206-2</id>
    </interactant>
    <interactant intactId="EBI-741237">
        <id>O60504</id>
        <label>SORBS3</label>
    </interactant>
    <organismsDiffer>false</organismsDiffer>
    <experiments>3</experiments>
</comment>
<comment type="interaction">
    <interactant intactId="EBI-11027067">
        <id>P18206-2</id>
    </interactant>
    <interactant intactId="EBI-367540">
        <id>P68135</id>
        <label>ACTA1</label>
    </interactant>
    <organismsDiffer>true</organismsDiffer>
    <experiments>2</experiments>
</comment>
<comment type="subcellular location">
    <subcellularLocation>
        <location evidence="1">Cell membrane</location>
        <topology evidence="1">Peripheral membrane protein</topology>
        <orientation evidence="1">Cytoplasmic side</orientation>
    </subcellularLocation>
    <subcellularLocation>
        <location evidence="1">Cell junction</location>
        <location evidence="1">Adherens junction</location>
    </subcellularLocation>
    <subcellularLocation>
        <location evidence="1">Cell junction</location>
        <location evidence="1">Focal adhesion</location>
    </subcellularLocation>
    <subcellularLocation>
        <location evidence="2">Cytoplasm</location>
        <location evidence="2">Cytoskeleton</location>
    </subcellularLocation>
    <subcellularLocation>
        <location evidence="3">Cell membrane</location>
        <location evidence="3">Sarcolemma</location>
        <topology evidence="3">Peripheral membrane protein</topology>
        <orientation evidence="3">Cytoplasmic side</orientation>
    </subcellularLocation>
    <subcellularLocation>
        <location evidence="3">Cell projection</location>
        <location evidence="3">Podosome</location>
    </subcellularLocation>
    <text evidence="1">Recruitment to cell-cell junctions occurs in a myosin II-dependent manner. Interaction with CTNNB1 is necessary for its localization to the cell-cell junctions.</text>
</comment>
<comment type="alternative products">
    <event type="alternative splicing"/>
    <isoform>
        <id>P18206-1</id>
        <name>2</name>
        <name>Metavinculin</name>
        <sequence type="displayed"/>
    </isoform>
    <isoform>
        <id>P18206-2</id>
        <name>1</name>
        <name>Vinculin</name>
        <sequence type="described" ref="VSP_006731"/>
    </isoform>
    <isoform>
        <id>P18206-3</id>
        <name>3</name>
        <sequence type="described" ref="VSP_011857 VSP_011858 VSP_011859"/>
    </isoform>
</comment>
<comment type="tissue specificity">
    <text>Metavinculin is muscle-specific.</text>
</comment>
<comment type="domain">
    <text evidence="15">Exists in at least two conformations. When in the closed, 'inactive' conformation, extensive interactions between the head and tail domains prevent detectable binding to most of its ligands. It takes on an 'active' conformation after cooperative and simultaneous binding of two different ligands. This activation involves displacement of the head-tail interactions and leads to a significant accumulation of ternary complexes. The active form then binds a number of proteins that have both signaling and structural roles that are essential for cell adhesion.</text>
</comment>
<comment type="domain">
    <text evidence="15">The N-terminal globular head (Vh) comprises of subdomains D1-D4. The C-terminal tail (Vt) binds F-actin and cross-links actin filaments into bundles. In isoform 2 (metavinculin) a 68 residue insertion in the tail domain promotes actin severing instead of bundling. An intramolecular interaction between Vh and Vt masks the F-actin-binding domain located in Vt. The binding of talin and alpha-actinin to the D1 subdomain of vinculin induces a helical bundle conversion of this subdomain, leading to the disruption of the intramolecular interaction and the exposure of the cryptic F-actin-binding domain of Vt. Vt inhibits actin filament barbed end elongation without affecting the critical concentration of actin assembly.</text>
</comment>
<comment type="PTM">
    <text evidence="1">Phosphorylated; on serines, threonines and tyrosines. Phosphorylation on Tyr-1133 in activated platelets affects head-tail interactions and cell spreading but has no effect on actin binding nor on localization to focal adhesion plaques (By similarity).</text>
</comment>
<comment type="PTM">
    <text evidence="1">Acetylated; mainly by myristic acid but also by a small amount of palmitic acid.</text>
</comment>
<comment type="disease" evidence="6 12">
    <disease id="DI-00225">
        <name>Cardiomyopathy, dilated, 1W</name>
        <acronym>CMD1W</acronym>
        <description>A disorder characterized by ventricular dilation and impaired systolic function, resulting in congestive heart failure and arrhythmia. Patients are at risk of premature death.</description>
        <dbReference type="MIM" id="611407"/>
    </disease>
    <text>The disease is caused by variants affecting the gene represented in this entry.</text>
</comment>
<comment type="disease" evidence="13">
    <disease id="DI-02679">
        <name>Cardiomyopathy, familial hypertrophic, 15</name>
        <acronym>CMH15</acronym>
        <description>A hereditary heart disorder characterized by ventricular hypertrophy, which is usually asymmetric and often involves the interventricular septum. The symptoms include dyspnea, syncope, collapse, palpitations, and chest pain. They can be readily provoked by exercise. The disorder has inter- and intrafamilial variability ranging from benign to malignant forms with high risk of cardiac failure and sudden cardiac death.</description>
        <dbReference type="MIM" id="613255"/>
    </disease>
    <text>The disease is caused by variants affecting the gene represented in this entry.</text>
</comment>
<comment type="similarity">
    <text evidence="22">Belongs to the vinculin/alpha-catenin family.</text>
</comment>
<comment type="online information" name="Wikipedia">
    <link uri="https://en.wikipedia.org/wiki/Vinculin"/>
    <text>Vinculin entry</text>
</comment>
<gene>
    <name type="primary">VCL</name>
</gene>
<evidence type="ECO:0000250" key="1">
    <source>
        <dbReference type="UniProtKB" id="P12003"/>
    </source>
</evidence>
<evidence type="ECO:0000250" key="2">
    <source>
        <dbReference type="UniProtKB" id="P85972"/>
    </source>
</evidence>
<evidence type="ECO:0000250" key="3">
    <source>
        <dbReference type="UniProtKB" id="Q64727"/>
    </source>
</evidence>
<evidence type="ECO:0000255" key="4"/>
<evidence type="ECO:0000256" key="5">
    <source>
        <dbReference type="SAM" id="MobiDB-lite"/>
    </source>
</evidence>
<evidence type="ECO:0000269" key="6">
    <source>
    </source>
</evidence>
<evidence type="ECO:0000269" key="7">
    <source>
    </source>
</evidence>
<evidence type="ECO:0000269" key="8">
    <source>
    </source>
</evidence>
<evidence type="ECO:0000269" key="9">
    <source>
    </source>
</evidence>
<evidence type="ECO:0000269" key="10">
    <source>
    </source>
</evidence>
<evidence type="ECO:0000269" key="11">
    <source>
    </source>
</evidence>
<evidence type="ECO:0000269" key="12">
    <source>
    </source>
</evidence>
<evidence type="ECO:0000269" key="13">
    <source>
    </source>
</evidence>
<evidence type="ECO:0000269" key="14">
    <source>
    </source>
</evidence>
<evidence type="ECO:0000269" key="15">
    <source>
    </source>
</evidence>
<evidence type="ECO:0000269" key="16">
    <source>
    </source>
</evidence>
<evidence type="ECO:0000269" key="17">
    <source>
    </source>
</evidence>
<evidence type="ECO:0000269" key="18">
    <source>
    </source>
</evidence>
<evidence type="ECO:0000303" key="19">
    <source>
    </source>
</evidence>
<evidence type="ECO:0000303" key="20">
    <source>
    </source>
</evidence>
<evidence type="ECO:0000303" key="21">
    <source>
    </source>
</evidence>
<evidence type="ECO:0000305" key="22"/>
<evidence type="ECO:0007744" key="23">
    <source>
        <dbReference type="PDB" id="1YDI"/>
    </source>
</evidence>
<evidence type="ECO:0007744" key="24">
    <source>
    </source>
</evidence>
<evidence type="ECO:0007744" key="25">
    <source>
    </source>
</evidence>
<evidence type="ECO:0007744" key="26">
    <source>
    </source>
</evidence>
<evidence type="ECO:0007744" key="27">
    <source>
    </source>
</evidence>
<evidence type="ECO:0007744" key="28">
    <source>
    </source>
</evidence>
<evidence type="ECO:0007744" key="29">
    <source>
    </source>
</evidence>
<evidence type="ECO:0007744" key="30">
    <source>
    </source>
</evidence>
<evidence type="ECO:0007829" key="31">
    <source>
        <dbReference type="PDB" id="1RKC"/>
    </source>
</evidence>
<evidence type="ECO:0007829" key="32">
    <source>
        <dbReference type="PDB" id="1TR2"/>
    </source>
</evidence>
<evidence type="ECO:0007829" key="33">
    <source>
        <dbReference type="PDB" id="1YDI"/>
    </source>
</evidence>
<evidence type="ECO:0007829" key="34">
    <source>
        <dbReference type="PDB" id="3H2U"/>
    </source>
</evidence>
<evidence type="ECO:0007829" key="35">
    <source>
        <dbReference type="PDB" id="3H2V"/>
    </source>
</evidence>
<evidence type="ECO:0007829" key="36">
    <source>
        <dbReference type="PDB" id="3MYI"/>
    </source>
</evidence>
<evidence type="ECO:0007829" key="37">
    <source>
        <dbReference type="PDB" id="3RF3"/>
    </source>
</evidence>
<evidence type="ECO:0007829" key="38">
    <source>
        <dbReference type="PDB" id="3TJ6"/>
    </source>
</evidence>
<evidence type="ECO:0007829" key="39">
    <source>
        <dbReference type="PDB" id="3VF0"/>
    </source>
</evidence>
<evidence type="ECO:0007829" key="40">
    <source>
        <dbReference type="PDB" id="4EHP"/>
    </source>
</evidence>
<evidence type="ECO:0007829" key="41">
    <source>
        <dbReference type="PDB" id="5L0F"/>
    </source>
</evidence>
<evidence type="ECO:0007829" key="42">
    <source>
        <dbReference type="PDB" id="6FUY"/>
    </source>
</evidence>
<sequence>MPVFHTRTIESILEPVAQQISHLVIMHEEGEVDGKAIPDLTAPVAAVQAAVSNLVRVGKETVQTTEDQILKRDMPPAFIKVENACTKLVQAAQMLQSDPYSVPARDYLIDGSRGILSGTSDLLLTFDEAEVRKIIRVCKGILEYLTVAEVVETMEDLVTYTKNLGPGMTKMAKMIDERQQELTHQEHRVMLVNSMNTVKELLPVLISAMKIFVTTKNSKNQGIEEALKNRNFTVEKMSAEINEIIRVLQLTSWDEDAWASKDTEAMKRALASIDSKLNQAKGWLRDPSASPGDAGEQAIRQILDEAGKVGELCAGKERREILGTCKMLGQMTDQVADLRARGQGSSPVAMQKAQQVSQGLDVLTAKVENAARKLEAMTNSKQSIAKKIDAAQNWLADPNGGPEGEEQIRGALAEARKIAELCDDPKERDDILRSLGEISALTSKLADLRRQGKGDSPEARALAKQVATALQNLQTKTNRAVANSRPAKAAVHLEGKIEQAQRWIDNPTVDDRGVGQAAIRGLVAEGHRLANVMMGPYRQDLLAKCDRVDQLTAQLADLAARGEGESPQARALASQLQDSLKDLKARMQEAMTQEVSDVFSDTTTPIKLLAVAATAPPDAPNREEVFDERAANFENHSGKLGATAEKAAAVGTANKSTVEGIQASVKTARELTPQVVSAARILLRNPGNQAAYEHFETMKNQWIDNVEKMTGLVDEAIDTKSLLDASEEAIKKDLDKCKVAMANIQPQMLVAGATSIARRANRILLVAKREVENSEDPKFREAVKAASDELSKTISPMVMDAKAVAGNISDPGLQKSFLDSGYRILGAVAKVREAFQPQEPDFPPPPPDLEQLRLTDELAPPKPPLPEGEVPPPRPPPPEEKDEEFPEQKAGEVINQPMMMAARQLHDEARKWSSKPGIPAAEVGIGVVAEADAADAAGFPVPPDMEDDYEPELLLMPSNQPVNQPILAAAQSLHREATKWSSKGNDIIAAAKRMALLMAEMSRLVRGGSGTKRALIQCAKDIAKASDEVTRLAKEVAKQCTDKRIRTNLLQVCERIPTISTQLKILSTVKATMLGRTNISDEESEQATEMLVHNAQNLMQSVKETVREAEAASIKIRTDAGFTLRWVRKTPWYQ</sequence>
<proteinExistence type="evidence at protein level"/>
<feature type="chain" id="PRO_0000064252" description="Vinculin">
    <location>
        <begin position="1"/>
        <end position="1134"/>
    </location>
</feature>
<feature type="repeat" description="1" evidence="4">
    <location>
        <begin position="259"/>
        <end position="369"/>
    </location>
</feature>
<feature type="repeat" description="2" evidence="4">
    <location>
        <begin position="370"/>
        <end position="479"/>
    </location>
</feature>
<feature type="repeat" description="3" evidence="4">
    <location>
        <begin position="480"/>
        <end position="589"/>
    </location>
</feature>
<feature type="region of interest" description="N-terminal globular head" evidence="15">
    <location>
        <begin position="1"/>
        <end position="835"/>
    </location>
</feature>
<feature type="region of interest" description="Talin-interaction" evidence="1">
    <location>
        <begin position="168"/>
        <end position="208"/>
    </location>
</feature>
<feature type="region of interest" description="3 X 112 AA tandem repeats" evidence="4">
    <location>
        <begin position="259"/>
        <end position="589"/>
    </location>
</feature>
<feature type="region of interest" description="Interaction with ACTN4" evidence="11 23">
    <location>
        <begin position="741"/>
        <end position="764"/>
    </location>
</feature>
<feature type="region of interest" description="Linker (Pro-rich)" evidence="15">
    <location>
        <begin position="836"/>
        <end position="878"/>
    </location>
</feature>
<feature type="region of interest" description="Disordered" evidence="5">
    <location>
        <begin position="857"/>
        <end position="887"/>
    </location>
</feature>
<feature type="region of interest" description="C-terminal tail" evidence="15">
    <location>
        <begin position="879"/>
        <end position="1134"/>
    </location>
</feature>
<feature type="region of interest" description="Facilitates phospholipid membrane insertion" evidence="3">
    <location>
        <begin position="1003"/>
        <end position="1046"/>
    </location>
</feature>
<feature type="region of interest" description="Facilitates phospholipid membrane insertion" evidence="3">
    <location>
        <begin position="1120"/>
        <end position="1134"/>
    </location>
</feature>
<feature type="compositionally biased region" description="Pro residues" evidence="5">
    <location>
        <begin position="860"/>
        <end position="876"/>
    </location>
</feature>
<feature type="modified residue" description="Phosphoserine" evidence="2">
    <location>
        <position position="97"/>
    </location>
</feature>
<feature type="modified residue" description="N6-acetyllysine" evidence="26">
    <location>
        <position position="173"/>
    </location>
</feature>
<feature type="modified residue" description="Phosphoserine" evidence="30">
    <location>
        <position position="260"/>
    </location>
</feature>
<feature type="modified residue" description="Phosphoserine" evidence="2">
    <location>
        <position position="272"/>
    </location>
</feature>
<feature type="modified residue" description="Phosphoserine" evidence="30">
    <location>
        <position position="275"/>
    </location>
</feature>
<feature type="modified residue" description="Phosphoserine" evidence="27 29 30">
    <location>
        <position position="288"/>
    </location>
</feature>
<feature type="modified residue" description="Phosphoserine" evidence="25 27 28 30">
    <location>
        <position position="290"/>
    </location>
</feature>
<feature type="modified residue" description="Phosphoserine" evidence="28 30">
    <location>
        <position position="346"/>
    </location>
</feature>
<feature type="modified residue" description="Phosphoserine" evidence="28">
    <location>
        <position position="434"/>
    </location>
</feature>
<feature type="modified residue" description="N6-acetyllysine" evidence="26">
    <location>
        <position position="496"/>
    </location>
</feature>
<feature type="modified residue" description="Phosphotyrosine" evidence="22">
    <location>
        <position position="537"/>
    </location>
</feature>
<feature type="modified residue" description="Phosphoserine" evidence="2">
    <location>
        <position position="574"/>
    </location>
</feature>
<feature type="modified residue" description="Phosphoserine" evidence="30">
    <location>
        <position position="579"/>
    </location>
</feature>
<feature type="modified residue" description="Phosphoserine" evidence="30">
    <location>
        <position position="600"/>
    </location>
</feature>
<feature type="modified residue" description="Phosphothreonine" evidence="30">
    <location>
        <position position="604"/>
    </location>
</feature>
<feature type="modified residue" description="Phosphothreonine" evidence="29">
    <location>
        <position position="672"/>
    </location>
</feature>
<feature type="modified residue" description="Phosphoserine" evidence="24 25 27 28 29 30">
    <location>
        <position position="721"/>
    </location>
</feature>
<feature type="modified residue" description="Phosphoserine" evidence="30">
    <location>
        <position position="795"/>
    </location>
</feature>
<feature type="modified residue" description="Phosphoserine" evidence="30">
    <location>
        <position position="809"/>
    </location>
</feature>
<feature type="modified residue" description="Phosphotyrosine" evidence="25">
    <location>
        <position position="822"/>
    </location>
</feature>
<feature type="modified residue" description="Phosphotyrosine; by SRC-type Tyr-kinases" evidence="9">
    <location>
        <position position="1133"/>
    </location>
</feature>
<feature type="splice variant" id="VSP_011857" description="In isoform 3." evidence="20">
    <location>
        <begin position="1"/>
        <end position="73"/>
    </location>
</feature>
<feature type="splice variant" id="VSP_011858" description="In isoform 3." evidence="20">
    <original>DTEAMKRALASIDSKLNQAKGWLRDPSASPGDAG</original>
    <variation>VRVLSGEISKIPNSPWLGVLIGTCLILYLVIFVA</variation>
    <location>
        <begin position="262"/>
        <end position="295"/>
    </location>
</feature>
<feature type="splice variant" id="VSP_011859" description="In isoform 3." evidence="20">
    <location>
        <begin position="296"/>
        <end position="1134"/>
    </location>
</feature>
<feature type="splice variant" id="VSP_006731" description="In isoform 1." evidence="19 21">
    <location>
        <begin position="916"/>
        <end position="983"/>
    </location>
</feature>
<feature type="sequence variant" id="VAR_037667" description="In dbSNP:rs17853882." evidence="10">
    <original>V</original>
    <variation>L</variation>
    <location>
        <position position="234"/>
    </location>
</feature>
<feature type="sequence variant" id="VAR_035101" description="In CMH15; dbSNP:rs71579353." evidence="13">
    <original>L</original>
    <variation>M</variation>
    <location>
        <position position="277"/>
    </location>
</feature>
<feature type="sequence variant" id="VAR_035102" description="In dbSNP:rs16931179." evidence="12">
    <original>A</original>
    <variation>V</variation>
    <location>
        <position position="934"/>
    </location>
</feature>
<feature type="sequence variant" id="VAR_035103" description="In dbSNP:rs71579375." evidence="12">
    <original>P</original>
    <variation>A</variation>
    <location>
        <position position="943"/>
    </location>
</feature>
<feature type="sequence variant" id="VAR_035104" description="In CMD1W." evidence="6">
    <location>
        <position position="954"/>
    </location>
</feature>
<feature type="sequence variant" id="VAR_035105" description="In CMD1W; significantly alters metavinculin-mediated cross-linking of actin filaments; dbSNP:rs121917776." evidence="6 12">
    <original>R</original>
    <variation>W</variation>
    <location>
        <position position="975"/>
    </location>
</feature>
<feature type="strand" evidence="40">
    <location>
        <begin position="4"/>
        <end position="6"/>
    </location>
</feature>
<feature type="helix" evidence="37">
    <location>
        <begin position="7"/>
        <end position="13"/>
    </location>
</feature>
<feature type="helix" evidence="37">
    <location>
        <begin position="16"/>
        <end position="26"/>
    </location>
</feature>
<feature type="strand" evidence="37">
    <location>
        <begin position="28"/>
        <end position="30"/>
    </location>
</feature>
<feature type="strand" evidence="32">
    <location>
        <begin position="33"/>
        <end position="35"/>
    </location>
</feature>
<feature type="helix" evidence="31">
    <location>
        <begin position="38"/>
        <end position="40"/>
    </location>
</feature>
<feature type="helix" evidence="37">
    <location>
        <begin position="41"/>
        <end position="64"/>
    </location>
</feature>
<feature type="helix" evidence="37">
    <location>
        <begin position="68"/>
        <end position="97"/>
    </location>
</feature>
<feature type="helix" evidence="37">
    <location>
        <begin position="102"/>
        <end position="145"/>
    </location>
</feature>
<feature type="helix" evidence="37">
    <location>
        <begin position="146"/>
        <end position="150"/>
    </location>
</feature>
<feature type="helix" evidence="37">
    <location>
        <begin position="154"/>
        <end position="179"/>
    </location>
</feature>
<feature type="helix" evidence="37">
    <location>
        <begin position="185"/>
        <end position="218"/>
    </location>
</feature>
<feature type="strand" evidence="38">
    <location>
        <begin position="220"/>
        <end position="222"/>
    </location>
</feature>
<feature type="helix" evidence="37">
    <location>
        <begin position="223"/>
        <end position="248"/>
    </location>
</feature>
<feature type="helix" evidence="33">
    <location>
        <begin position="253"/>
        <end position="255"/>
    </location>
</feature>
<feature type="helix" evidence="32">
    <location>
        <begin position="258"/>
        <end position="274"/>
    </location>
</feature>
<feature type="helix" evidence="32">
    <location>
        <begin position="277"/>
        <end position="284"/>
    </location>
</feature>
<feature type="strand" evidence="42">
    <location>
        <begin position="285"/>
        <end position="287"/>
    </location>
</feature>
<feature type="helix" evidence="32">
    <location>
        <begin position="294"/>
        <end position="310"/>
    </location>
</feature>
<feature type="helix" evidence="32">
    <location>
        <begin position="315"/>
        <end position="338"/>
    </location>
</feature>
<feature type="turn" evidence="32">
    <location>
        <begin position="339"/>
        <end position="342"/>
    </location>
</feature>
<feature type="helix" evidence="32">
    <location>
        <begin position="343"/>
        <end position="345"/>
    </location>
</feature>
<feature type="helix" evidence="32">
    <location>
        <begin position="347"/>
        <end position="351"/>
    </location>
</feature>
<feature type="helix" evidence="32">
    <location>
        <begin position="353"/>
        <end position="393"/>
    </location>
</feature>
<feature type="turn" evidence="32">
    <location>
        <begin position="394"/>
        <end position="396"/>
    </location>
</feature>
<feature type="helix" evidence="32">
    <location>
        <begin position="402"/>
        <end position="420"/>
    </location>
</feature>
<feature type="helix" evidence="32">
    <location>
        <begin position="425"/>
        <end position="447"/>
    </location>
</feature>
<feature type="turn" evidence="32">
    <location>
        <begin position="448"/>
        <end position="450"/>
    </location>
</feature>
<feature type="turn" evidence="32">
    <location>
        <begin position="455"/>
        <end position="458"/>
    </location>
</feature>
<feature type="helix" evidence="32">
    <location>
        <begin position="460"/>
        <end position="482"/>
    </location>
</feature>
<feature type="helix" evidence="32">
    <location>
        <begin position="493"/>
        <end position="505"/>
    </location>
</feature>
<feature type="helix" evidence="32">
    <location>
        <begin position="514"/>
        <end position="530"/>
    </location>
</feature>
<feature type="helix" evidence="32">
    <location>
        <begin position="535"/>
        <end position="561"/>
    </location>
</feature>
<feature type="strand" evidence="42">
    <location>
        <begin position="564"/>
        <end position="566"/>
    </location>
</feature>
<feature type="helix" evidence="32">
    <location>
        <begin position="568"/>
        <end position="577"/>
    </location>
</feature>
<feature type="helix" evidence="32">
    <location>
        <begin position="579"/>
        <end position="598"/>
    </location>
</feature>
<feature type="helix" evidence="32">
    <location>
        <begin position="604"/>
        <end position="614"/>
    </location>
</feature>
<feature type="turn" evidence="32">
    <location>
        <begin position="620"/>
        <end position="624"/>
    </location>
</feature>
<feature type="helix" evidence="32">
    <location>
        <begin position="625"/>
        <end position="650"/>
    </location>
</feature>
<feature type="helix" evidence="32">
    <location>
        <begin position="655"/>
        <end position="681"/>
    </location>
</feature>
<feature type="helix" evidence="32">
    <location>
        <begin position="690"/>
        <end position="714"/>
    </location>
</feature>
<feature type="helix" evidence="32">
    <location>
        <begin position="719"/>
        <end position="743"/>
    </location>
</feature>
<feature type="helix" evidence="32">
    <location>
        <begin position="746"/>
        <end position="772"/>
    </location>
</feature>
<feature type="helix" evidence="32">
    <location>
        <begin position="777"/>
        <end position="792"/>
    </location>
</feature>
<feature type="helix" evidence="32">
    <location>
        <begin position="794"/>
        <end position="806"/>
    </location>
</feature>
<feature type="turn" evidence="32">
    <location>
        <begin position="811"/>
        <end position="813"/>
    </location>
</feature>
<feature type="helix" evidence="32">
    <location>
        <begin position="814"/>
        <end position="833"/>
    </location>
</feature>
<feature type="helix" evidence="32">
    <location>
        <begin position="896"/>
        <end position="909"/>
    </location>
</feature>
<feature type="helix" evidence="36">
    <location>
        <begin position="964"/>
        <end position="977"/>
    </location>
</feature>
<feature type="helix" evidence="36">
    <location>
        <begin position="986"/>
        <end position="1005"/>
    </location>
</feature>
<feature type="helix" evidence="41">
    <location>
        <begin position="1009"/>
        <end position="1011"/>
    </location>
</feature>
<feature type="helix" evidence="36">
    <location>
        <begin position="1012"/>
        <end position="1037"/>
    </location>
</feature>
<feature type="helix" evidence="36">
    <location>
        <begin position="1043"/>
        <end position="1053"/>
    </location>
</feature>
<feature type="helix" evidence="36">
    <location>
        <begin position="1056"/>
        <end position="1072"/>
    </location>
</feature>
<feature type="turn" evidence="36">
    <location>
        <begin position="1073"/>
        <end position="1076"/>
    </location>
</feature>
<feature type="strand" evidence="34">
    <location>
        <begin position="1077"/>
        <end position="1079"/>
    </location>
</feature>
<feature type="helix" evidence="36">
    <location>
        <begin position="1081"/>
        <end position="1113"/>
    </location>
</feature>
<feature type="strand" evidence="35">
    <location>
        <begin position="1114"/>
        <end position="1117"/>
    </location>
</feature>
<feature type="turn" evidence="41">
    <location>
        <begin position="1120"/>
        <end position="1122"/>
    </location>
</feature>
<feature type="strand" evidence="39">
    <location>
        <begin position="1128"/>
        <end position="1130"/>
    </location>
</feature>
<dbReference type="EMBL" id="M33308">
    <property type="protein sequence ID" value="AAA61283.1"/>
    <property type="molecule type" value="mRNA"/>
</dbReference>
<dbReference type="EMBL" id="BX537994">
    <property type="protein sequence ID" value="CAD97952.1"/>
    <property type="molecule type" value="mRNA"/>
</dbReference>
<dbReference type="EMBL" id="AL596247">
    <property type="protein sequence ID" value="CAI13972.1"/>
    <property type="molecule type" value="Genomic_DNA"/>
</dbReference>
<dbReference type="EMBL" id="AL731576">
    <property type="protein sequence ID" value="CAI13972.1"/>
    <property type="status" value="JOINED"/>
    <property type="molecule type" value="Genomic_DNA"/>
</dbReference>
<dbReference type="EMBL" id="AL731576">
    <property type="protein sequence ID" value="CAI39673.1"/>
    <property type="molecule type" value="Genomic_DNA"/>
</dbReference>
<dbReference type="EMBL" id="AL596247">
    <property type="protein sequence ID" value="CAI39673.1"/>
    <property type="status" value="JOINED"/>
    <property type="molecule type" value="Genomic_DNA"/>
</dbReference>
<dbReference type="EMBL" id="BC039174">
    <property type="protein sequence ID" value="AAH39174.1"/>
    <property type="molecule type" value="mRNA"/>
</dbReference>
<dbReference type="EMBL" id="L04933">
    <property type="protein sequence ID" value="AAA61271.1"/>
    <property type="molecule type" value="Genomic_DNA"/>
</dbReference>
<dbReference type="EMBL" id="S87180">
    <property type="protein sequence ID" value="AAB21656.1"/>
    <property type="molecule type" value="Genomic_DNA"/>
</dbReference>
<dbReference type="EMBL" id="S87175">
    <property type="protein sequence ID" value="AAB21656.1"/>
    <property type="status" value="JOINED"/>
    <property type="molecule type" value="Genomic_DNA"/>
</dbReference>
<dbReference type="EMBL" id="S87178">
    <property type="protein sequence ID" value="AAB21656.1"/>
    <property type="status" value="JOINED"/>
    <property type="molecule type" value="Genomic_DNA"/>
</dbReference>
<dbReference type="EMBL" id="S87223">
    <property type="protein sequence ID" value="AAB21657.1"/>
    <property type="molecule type" value="Genomic_DNA"/>
</dbReference>
<dbReference type="EMBL" id="S87218">
    <property type="protein sequence ID" value="AAB21657.1"/>
    <property type="status" value="JOINED"/>
    <property type="molecule type" value="Genomic_DNA"/>
</dbReference>
<dbReference type="CCDS" id="CCDS7340.1">
    <molecule id="P18206-2"/>
</dbReference>
<dbReference type="CCDS" id="CCDS7341.1">
    <molecule id="P18206-1"/>
</dbReference>
<dbReference type="PIR" id="A35955">
    <property type="entry name" value="A35955"/>
</dbReference>
<dbReference type="RefSeq" id="NP_003364.1">
    <molecule id="P18206-2"/>
    <property type="nucleotide sequence ID" value="NM_003373.4"/>
</dbReference>
<dbReference type="RefSeq" id="NP_054706.1">
    <molecule id="P18206-1"/>
    <property type="nucleotide sequence ID" value="NM_014000.3"/>
</dbReference>
<dbReference type="PDB" id="1RKC">
    <property type="method" value="X-ray"/>
    <property type="resolution" value="2.70 A"/>
    <property type="chains" value="A=1-258"/>
</dbReference>
<dbReference type="PDB" id="1RKE">
    <property type="method" value="X-ray"/>
    <property type="resolution" value="2.35 A"/>
    <property type="chains" value="A=1-258, B=882-1134"/>
</dbReference>
<dbReference type="PDB" id="1SYQ">
    <property type="method" value="X-ray"/>
    <property type="resolution" value="2.42 A"/>
    <property type="chains" value="A=1-258"/>
</dbReference>
<dbReference type="PDB" id="1TR2">
    <property type="method" value="X-ray"/>
    <property type="resolution" value="2.90 A"/>
    <property type="chains" value="A/B=1-1134"/>
</dbReference>
<dbReference type="PDB" id="1YDI">
    <property type="method" value="X-ray"/>
    <property type="resolution" value="1.80 A"/>
    <property type="chains" value="A=1-258"/>
</dbReference>
<dbReference type="PDB" id="2GWW">
    <property type="method" value="X-ray"/>
    <property type="resolution" value="2.72 A"/>
    <property type="chains" value="A=1-258"/>
</dbReference>
<dbReference type="PDB" id="2HSQ">
    <property type="method" value="X-ray"/>
    <property type="resolution" value="3.97 A"/>
    <property type="chains" value="A=1-258"/>
</dbReference>
<dbReference type="PDB" id="2IBF">
    <property type="method" value="X-ray"/>
    <property type="resolution" value="3.20 A"/>
    <property type="chains" value="A=1-258"/>
</dbReference>
<dbReference type="PDB" id="3H2U">
    <property type="method" value="X-ray"/>
    <property type="resolution" value="2.75 A"/>
    <property type="chains" value="A/C=879-1134"/>
</dbReference>
<dbReference type="PDB" id="3H2V">
    <property type="method" value="X-ray"/>
    <property type="resolution" value="2.90 A"/>
    <property type="chains" value="A/B/C/D=879-1134"/>
</dbReference>
<dbReference type="PDB" id="3JBK">
    <property type="method" value="EM"/>
    <property type="resolution" value="8.20 A"/>
    <property type="chains" value="M=858-1129"/>
</dbReference>
<dbReference type="PDB" id="3MYI">
    <property type="method" value="X-ray"/>
    <property type="resolution" value="2.20 A"/>
    <property type="chains" value="A=959-1130"/>
</dbReference>
<dbReference type="PDB" id="3RF3">
    <property type="method" value="X-ray"/>
    <property type="resolution" value="1.61 A"/>
    <property type="chains" value="A/B=1-258"/>
</dbReference>
<dbReference type="PDB" id="3S90">
    <property type="method" value="X-ray"/>
    <property type="resolution" value="1.97 A"/>
    <property type="chains" value="A/B=1-252"/>
</dbReference>
<dbReference type="PDB" id="3TJ5">
    <property type="method" value="X-ray"/>
    <property type="resolution" value="1.99 A"/>
    <property type="chains" value="A=1-255"/>
</dbReference>
<dbReference type="PDB" id="3TJ6">
    <property type="method" value="X-ray"/>
    <property type="resolution" value="2.76 A"/>
    <property type="chains" value="A=1-257"/>
</dbReference>
<dbReference type="PDB" id="3VF0">
    <property type="method" value="X-ray"/>
    <property type="resolution" value="2.54 A"/>
    <property type="chains" value="A=856-1134"/>
</dbReference>
<dbReference type="PDB" id="4DJ9">
    <property type="method" value="X-ray"/>
    <property type="resolution" value="2.25 A"/>
    <property type="chains" value="A=1-258"/>
</dbReference>
<dbReference type="PDB" id="4EHP">
    <property type="method" value="X-ray"/>
    <property type="resolution" value="2.66 A"/>
    <property type="chains" value="A=1-252"/>
</dbReference>
<dbReference type="PDB" id="4LN2">
    <property type="method" value="X-ray"/>
    <property type="resolution" value="1.00 A"/>
    <property type="chains" value="B=857-867"/>
</dbReference>
<dbReference type="PDB" id="4LNP">
    <property type="method" value="X-ray"/>
    <property type="resolution" value="1.41 A"/>
    <property type="chains" value="B=870-879"/>
</dbReference>
<dbReference type="PDB" id="4PR9">
    <property type="method" value="X-ray"/>
    <property type="resolution" value="3.20 A"/>
    <property type="chains" value="A/B/C/D/E/F=891-1134"/>
</dbReference>
<dbReference type="PDB" id="5L0C">
    <property type="method" value="X-ray"/>
    <property type="resolution" value="3.10 A"/>
    <property type="chains" value="A/B/C/D=959-1134"/>
</dbReference>
<dbReference type="PDB" id="5L0D">
    <property type="method" value="X-ray"/>
    <property type="resolution" value="2.75 A"/>
    <property type="chains" value="A/B/C/D=959-1130"/>
</dbReference>
<dbReference type="PDB" id="5L0F">
    <property type="method" value="X-ray"/>
    <property type="resolution" value="2.76 A"/>
    <property type="chains" value="A/B=959-1134"/>
</dbReference>
<dbReference type="PDB" id="5L0G">
    <property type="method" value="X-ray"/>
    <property type="resolution" value="3.40 A"/>
    <property type="chains" value="A/B/C/D=959-1134"/>
</dbReference>
<dbReference type="PDB" id="5L0H">
    <property type="method" value="X-ray"/>
    <property type="resolution" value="2.90 A"/>
    <property type="chains" value="A=959-1134"/>
</dbReference>
<dbReference type="PDB" id="5L0I">
    <property type="method" value="X-ray"/>
    <property type="resolution" value="2.45 A"/>
    <property type="chains" value="A=959-1134"/>
</dbReference>
<dbReference type="PDB" id="5L0J">
    <property type="method" value="X-ray"/>
    <property type="resolution" value="4.00 A"/>
    <property type="chains" value="A/B=969-1134"/>
</dbReference>
<dbReference type="PDB" id="5O2Q">
    <property type="method" value="NMR"/>
    <property type="chains" value="A=854-870"/>
</dbReference>
<dbReference type="PDB" id="6FUY">
    <property type="method" value="X-ray"/>
    <property type="resolution" value="3.00 A"/>
    <property type="chains" value="A=1-1134"/>
</dbReference>
<dbReference type="PDB" id="6UPW">
    <property type="method" value="EM"/>
    <property type="resolution" value="2.90 A"/>
    <property type="chains" value="L/M=1-1134"/>
</dbReference>
<dbReference type="PDB" id="7KTT">
    <property type="method" value="EM"/>
    <property type="resolution" value="4.17 A"/>
    <property type="chains" value="A=1-1134"/>
</dbReference>
<dbReference type="PDB" id="7KTU">
    <property type="method" value="EM"/>
    <property type="resolution" value="4.15 A"/>
    <property type="chains" value="A=1-1134"/>
</dbReference>
<dbReference type="PDB" id="7KTV">
    <property type="method" value="EM"/>
    <property type="resolution" value="4.50 A"/>
    <property type="chains" value="A=1-1134"/>
</dbReference>
<dbReference type="PDB" id="7KTW">
    <property type="method" value="EM"/>
    <property type="resolution" value="4.27 A"/>
    <property type="chains" value="A=1-1134"/>
</dbReference>
<dbReference type="PDBsum" id="1RKC"/>
<dbReference type="PDBsum" id="1RKE"/>
<dbReference type="PDBsum" id="1SYQ"/>
<dbReference type="PDBsum" id="1TR2"/>
<dbReference type="PDBsum" id="1YDI"/>
<dbReference type="PDBsum" id="2GWW"/>
<dbReference type="PDBsum" id="2HSQ"/>
<dbReference type="PDBsum" id="2IBF"/>
<dbReference type="PDBsum" id="3H2U"/>
<dbReference type="PDBsum" id="3H2V"/>
<dbReference type="PDBsum" id="3JBK"/>
<dbReference type="PDBsum" id="3MYI"/>
<dbReference type="PDBsum" id="3RF3"/>
<dbReference type="PDBsum" id="3S90"/>
<dbReference type="PDBsum" id="3TJ5"/>
<dbReference type="PDBsum" id="3TJ6"/>
<dbReference type="PDBsum" id="3VF0"/>
<dbReference type="PDBsum" id="4DJ9"/>
<dbReference type="PDBsum" id="4EHP"/>
<dbReference type="PDBsum" id="4LN2"/>
<dbReference type="PDBsum" id="4LNP"/>
<dbReference type="PDBsum" id="4PR9"/>
<dbReference type="PDBsum" id="5L0C"/>
<dbReference type="PDBsum" id="5L0D"/>
<dbReference type="PDBsum" id="5L0F"/>
<dbReference type="PDBsum" id="5L0G"/>
<dbReference type="PDBsum" id="5L0H"/>
<dbReference type="PDBsum" id="5L0I"/>
<dbReference type="PDBsum" id="5L0J"/>
<dbReference type="PDBsum" id="5O2Q"/>
<dbReference type="PDBsum" id="6FUY"/>
<dbReference type="PDBsum" id="6UPW"/>
<dbReference type="PDBsum" id="7KTT"/>
<dbReference type="PDBsum" id="7KTU"/>
<dbReference type="PDBsum" id="7KTV"/>
<dbReference type="PDBsum" id="7KTW"/>
<dbReference type="EMDB" id="EMD-20844"/>
<dbReference type="EMDB" id="EMD-23029"/>
<dbReference type="EMDB" id="EMD-23030"/>
<dbReference type="EMDB" id="EMD-23031"/>
<dbReference type="EMDB" id="EMD-23032"/>
<dbReference type="EMDB" id="EMD-6447"/>
<dbReference type="SMR" id="P18206"/>
<dbReference type="BioGRID" id="113257">
    <property type="interactions" value="289"/>
</dbReference>
<dbReference type="ComplexPortal" id="CPX-791">
    <property type="entry name" value="Talin-1-Vinculin focal adhesion activation complex"/>
</dbReference>
<dbReference type="CORUM" id="P18206"/>
<dbReference type="DIP" id="DIP-35570N"/>
<dbReference type="ELM" id="P18206"/>
<dbReference type="FunCoup" id="P18206">
    <property type="interactions" value="1460"/>
</dbReference>
<dbReference type="IntAct" id="P18206">
    <property type="interactions" value="113"/>
</dbReference>
<dbReference type="MINT" id="P18206"/>
<dbReference type="STRING" id="9606.ENSP00000211998"/>
<dbReference type="ChEMBL" id="CHEMBL4295723"/>
<dbReference type="GlyGen" id="P18206">
    <property type="glycosylation" value="3 sites, 2 N-linked glycans (2 sites), 1 O-linked glycan (1 site)"/>
</dbReference>
<dbReference type="iPTMnet" id="P18206"/>
<dbReference type="MetOSite" id="P18206"/>
<dbReference type="PhosphoSitePlus" id="P18206"/>
<dbReference type="SwissPalm" id="P18206"/>
<dbReference type="BioMuta" id="VCL"/>
<dbReference type="DMDM" id="21903479"/>
<dbReference type="OGP" id="P18206"/>
<dbReference type="REPRODUCTION-2DPAGE" id="IPI00291175"/>
<dbReference type="jPOST" id="P18206"/>
<dbReference type="MassIVE" id="P18206"/>
<dbReference type="PaxDb" id="9606-ENSP00000211998"/>
<dbReference type="PeptideAtlas" id="P18206"/>
<dbReference type="ProteomicsDB" id="53553">
    <molecule id="P18206-1"/>
</dbReference>
<dbReference type="ProteomicsDB" id="53554">
    <molecule id="P18206-2"/>
</dbReference>
<dbReference type="ProteomicsDB" id="53555">
    <molecule id="P18206-3"/>
</dbReference>
<dbReference type="Pumba" id="P18206"/>
<dbReference type="Antibodypedia" id="884">
    <property type="antibodies" value="958 antibodies from 46 providers"/>
</dbReference>
<dbReference type="DNASU" id="7414"/>
<dbReference type="Ensembl" id="ENST00000211998.10">
    <molecule id="P18206-1"/>
    <property type="protein sequence ID" value="ENSP00000211998.5"/>
    <property type="gene ID" value="ENSG00000035403.18"/>
</dbReference>
<dbReference type="Ensembl" id="ENST00000372755.7">
    <molecule id="P18206-2"/>
    <property type="protein sequence ID" value="ENSP00000361841.3"/>
    <property type="gene ID" value="ENSG00000035403.18"/>
</dbReference>
<dbReference type="GeneID" id="7414"/>
<dbReference type="KEGG" id="hsa:7414"/>
<dbReference type="MANE-Select" id="ENST00000211998.10">
    <property type="protein sequence ID" value="ENSP00000211998.5"/>
    <property type="RefSeq nucleotide sequence ID" value="NM_014000.3"/>
    <property type="RefSeq protein sequence ID" value="NP_054706.1"/>
</dbReference>
<dbReference type="UCSC" id="uc001jwe.4">
    <molecule id="P18206-1"/>
    <property type="organism name" value="human"/>
</dbReference>
<dbReference type="AGR" id="HGNC:12665"/>
<dbReference type="CTD" id="7414"/>
<dbReference type="DisGeNET" id="7414"/>
<dbReference type="GeneCards" id="VCL"/>
<dbReference type="GeneReviews" id="VCL"/>
<dbReference type="HGNC" id="HGNC:12665">
    <property type="gene designation" value="VCL"/>
</dbReference>
<dbReference type="HPA" id="ENSG00000035403">
    <property type="expression patterns" value="Low tissue specificity"/>
</dbReference>
<dbReference type="MalaCards" id="VCL"/>
<dbReference type="MIM" id="193065">
    <property type="type" value="gene"/>
</dbReference>
<dbReference type="MIM" id="611407">
    <property type="type" value="phenotype"/>
</dbReference>
<dbReference type="MIM" id="613255">
    <property type="type" value="phenotype"/>
</dbReference>
<dbReference type="neXtProt" id="NX_P18206"/>
<dbReference type="OpenTargets" id="ENSG00000035403"/>
<dbReference type="Orphanet" id="154">
    <property type="disease" value="Familial isolated dilated cardiomyopathy"/>
</dbReference>
<dbReference type="PharmGKB" id="PA37288"/>
<dbReference type="VEuPathDB" id="HostDB:ENSG00000035403"/>
<dbReference type="eggNOG" id="KOG3681">
    <property type="taxonomic scope" value="Eukaryota"/>
</dbReference>
<dbReference type="GeneTree" id="ENSGT01030000234543"/>
<dbReference type="HOGENOM" id="CLU_012338_0_0_1"/>
<dbReference type="InParanoid" id="P18206"/>
<dbReference type="OMA" id="ANNLCEL"/>
<dbReference type="OrthoDB" id="29742at2759"/>
<dbReference type="PAN-GO" id="P18206">
    <property type="GO annotations" value="9 GO annotations based on evolutionary models"/>
</dbReference>
<dbReference type="PhylomeDB" id="P18206"/>
<dbReference type="TreeFam" id="TF313686"/>
<dbReference type="PathwayCommons" id="P18206"/>
<dbReference type="Reactome" id="R-HSA-114608">
    <property type="pathway name" value="Platelet degranulation"/>
</dbReference>
<dbReference type="Reactome" id="R-HSA-445355">
    <property type="pathway name" value="Smooth Muscle Contraction"/>
</dbReference>
<dbReference type="Reactome" id="R-HSA-5674135">
    <property type="pathway name" value="MAP2K and MAPK activation"/>
</dbReference>
<dbReference type="Reactome" id="R-HSA-6798695">
    <property type="pathway name" value="Neutrophil degranulation"/>
</dbReference>
<dbReference type="Reactome" id="R-HSA-6802946">
    <property type="pathway name" value="Signaling by moderate kinase activity BRAF mutants"/>
</dbReference>
<dbReference type="Reactome" id="R-HSA-6802948">
    <property type="pathway name" value="Signaling by high-kinase activity BRAF mutants"/>
</dbReference>
<dbReference type="Reactome" id="R-HSA-6802952">
    <property type="pathway name" value="Signaling by BRAF and RAF1 fusions"/>
</dbReference>
<dbReference type="Reactome" id="R-HSA-6802955">
    <property type="pathway name" value="Paradoxical activation of RAF signaling by kinase inactive BRAF"/>
</dbReference>
<dbReference type="Reactome" id="R-HSA-9649948">
    <property type="pathway name" value="Signaling downstream of RAS mutants"/>
</dbReference>
<dbReference type="Reactome" id="R-HSA-9656223">
    <property type="pathway name" value="Signaling by RAF1 mutants"/>
</dbReference>
<dbReference type="Reactome" id="R-HSA-9725370">
    <property type="pathway name" value="Signaling by ALK fusions and activated point mutants"/>
</dbReference>
<dbReference type="Reactome" id="R-HSA-9856530">
    <property type="pathway name" value="High laminar flow shear stress activates signaling by PIEZO1 and PECAM1:CDH5:KDR in endothelial cells"/>
</dbReference>
<dbReference type="Reactome" id="R-HSA-9860927">
    <property type="pathway name" value="Turbulent (oscillatory, disturbed) flow shear stress activates signaling by PIEZO1 and integrins in endothelial cells"/>
</dbReference>
<dbReference type="SignaLink" id="P18206"/>
<dbReference type="SIGNOR" id="P18206"/>
<dbReference type="BioGRID-ORCS" id="7414">
    <property type="hits" value="122 hits in 1153 CRISPR screens"/>
</dbReference>
<dbReference type="CD-CODE" id="8C2F96ED">
    <property type="entry name" value="Centrosome"/>
</dbReference>
<dbReference type="CD-CODE" id="FB4E32DD">
    <property type="entry name" value="Presynaptic clusters and postsynaptic densities"/>
</dbReference>
<dbReference type="ChiTaRS" id="VCL">
    <property type="organism name" value="human"/>
</dbReference>
<dbReference type="EvolutionaryTrace" id="P18206"/>
<dbReference type="GeneWiki" id="Vinculin"/>
<dbReference type="GenomeRNAi" id="7414"/>
<dbReference type="Pharos" id="P18206">
    <property type="development level" value="Tbio"/>
</dbReference>
<dbReference type="PRO" id="PR:P18206"/>
<dbReference type="Proteomes" id="UP000005640">
    <property type="component" value="Chromosome 10"/>
</dbReference>
<dbReference type="RNAct" id="P18206">
    <property type="molecule type" value="protein"/>
</dbReference>
<dbReference type="Bgee" id="ENSG00000035403">
    <property type="expression patterns" value="Expressed in saphenous vein and 211 other cell types or tissues"/>
</dbReference>
<dbReference type="ExpressionAtlas" id="P18206">
    <property type="expression patterns" value="baseline and differential"/>
</dbReference>
<dbReference type="GO" id="GO:0005912">
    <property type="term" value="C:adherens junction"/>
    <property type="evidence" value="ECO:0000314"/>
    <property type="project" value="BHF-UCL"/>
</dbReference>
<dbReference type="GO" id="GO:0005903">
    <property type="term" value="C:brush border"/>
    <property type="evidence" value="ECO:0000250"/>
    <property type="project" value="AgBase"/>
</dbReference>
<dbReference type="GO" id="GO:0042995">
    <property type="term" value="C:cell projection"/>
    <property type="evidence" value="ECO:0007669"/>
    <property type="project" value="UniProtKB-KW"/>
</dbReference>
<dbReference type="GO" id="GO:0044291">
    <property type="term" value="C:cell-cell contact zone"/>
    <property type="evidence" value="ECO:0000315"/>
    <property type="project" value="ARUK-UCL"/>
</dbReference>
<dbReference type="GO" id="GO:0005911">
    <property type="term" value="C:cell-cell junction"/>
    <property type="evidence" value="ECO:0000315"/>
    <property type="project" value="ARUK-UCL"/>
</dbReference>
<dbReference type="GO" id="GO:0030055">
    <property type="term" value="C:cell-substrate junction"/>
    <property type="evidence" value="ECO:0000303"/>
    <property type="project" value="UniProtKB"/>
</dbReference>
<dbReference type="GO" id="GO:0043034">
    <property type="term" value="C:costamere"/>
    <property type="evidence" value="ECO:0000314"/>
    <property type="project" value="MGI"/>
</dbReference>
<dbReference type="GO" id="GO:0005737">
    <property type="term" value="C:cytoplasm"/>
    <property type="evidence" value="ECO:0000318"/>
    <property type="project" value="GO_Central"/>
</dbReference>
<dbReference type="GO" id="GO:0005856">
    <property type="term" value="C:cytoskeleton"/>
    <property type="evidence" value="ECO:0000318"/>
    <property type="project" value="GO_Central"/>
</dbReference>
<dbReference type="GO" id="GO:0005829">
    <property type="term" value="C:cytosol"/>
    <property type="evidence" value="ECO:0000304"/>
    <property type="project" value="Reactome"/>
</dbReference>
<dbReference type="GO" id="GO:0070062">
    <property type="term" value="C:extracellular exosome"/>
    <property type="evidence" value="ECO:0007005"/>
    <property type="project" value="UniProtKB"/>
</dbReference>
<dbReference type="GO" id="GO:0005576">
    <property type="term" value="C:extracellular region"/>
    <property type="evidence" value="ECO:0000304"/>
    <property type="project" value="Reactome"/>
</dbReference>
<dbReference type="GO" id="GO:1903561">
    <property type="term" value="C:extracellular vesicle"/>
    <property type="evidence" value="ECO:0007005"/>
    <property type="project" value="UniProtKB"/>
</dbReference>
<dbReference type="GO" id="GO:0005916">
    <property type="term" value="C:fascia adherens"/>
    <property type="evidence" value="ECO:0007669"/>
    <property type="project" value="Ensembl"/>
</dbReference>
<dbReference type="GO" id="GO:1904813">
    <property type="term" value="C:ficolin-1-rich granule lumen"/>
    <property type="evidence" value="ECO:0000304"/>
    <property type="project" value="Reactome"/>
</dbReference>
<dbReference type="GO" id="GO:0005925">
    <property type="term" value="C:focal adhesion"/>
    <property type="evidence" value="ECO:0000314"/>
    <property type="project" value="BHF-UCL"/>
</dbReference>
<dbReference type="GO" id="GO:0090637">
    <property type="term" value="C:inner dense plaque of desmosome"/>
    <property type="evidence" value="ECO:0000250"/>
    <property type="project" value="AgBase"/>
</dbReference>
<dbReference type="GO" id="GO:0045121">
    <property type="term" value="C:membrane raft"/>
    <property type="evidence" value="ECO:0000314"/>
    <property type="project" value="UniProtKB"/>
</dbReference>
<dbReference type="GO" id="GO:0090636">
    <property type="term" value="C:outer dense plaque of desmosome"/>
    <property type="evidence" value="ECO:0000250"/>
    <property type="project" value="AgBase"/>
</dbReference>
<dbReference type="GO" id="GO:0005886">
    <property type="term" value="C:plasma membrane"/>
    <property type="evidence" value="ECO:0000250"/>
    <property type="project" value="AgBase"/>
</dbReference>
<dbReference type="GO" id="GO:0061826">
    <property type="term" value="C:podosome ring"/>
    <property type="evidence" value="ECO:0007669"/>
    <property type="project" value="Ensembl"/>
</dbReference>
<dbReference type="GO" id="GO:0032991">
    <property type="term" value="C:protein-containing complex"/>
    <property type="evidence" value="ECO:0000314"/>
    <property type="project" value="UniProtKB"/>
</dbReference>
<dbReference type="GO" id="GO:0042383">
    <property type="term" value="C:sarcolemma"/>
    <property type="evidence" value="ECO:0000250"/>
    <property type="project" value="UniProtKB"/>
</dbReference>
<dbReference type="GO" id="GO:0034774">
    <property type="term" value="C:secretory granule lumen"/>
    <property type="evidence" value="ECO:0000304"/>
    <property type="project" value="Reactome"/>
</dbReference>
<dbReference type="GO" id="GO:0035580">
    <property type="term" value="C:specific granule lumen"/>
    <property type="evidence" value="ECO:0000304"/>
    <property type="project" value="Reactome"/>
</dbReference>
<dbReference type="GO" id="GO:1990357">
    <property type="term" value="C:terminal web"/>
    <property type="evidence" value="ECO:0000250"/>
    <property type="project" value="AgBase"/>
</dbReference>
<dbReference type="GO" id="GO:0005915">
    <property type="term" value="C:zonula adherens"/>
    <property type="evidence" value="ECO:0000250"/>
    <property type="project" value="AgBase"/>
</dbReference>
<dbReference type="GO" id="GO:0003779">
    <property type="term" value="F:actin binding"/>
    <property type="evidence" value="ECO:0000314"/>
    <property type="project" value="BHF-UCL"/>
</dbReference>
<dbReference type="GO" id="GO:0045294">
    <property type="term" value="F:alpha-catenin binding"/>
    <property type="evidence" value="ECO:0000353"/>
    <property type="project" value="UniProtKB"/>
</dbReference>
<dbReference type="GO" id="GO:0008013">
    <property type="term" value="F:beta-catenin binding"/>
    <property type="evidence" value="ECO:0000250"/>
    <property type="project" value="BHF-UCL"/>
</dbReference>
<dbReference type="GO" id="GO:0045296">
    <property type="term" value="F:cadherin binding"/>
    <property type="evidence" value="ECO:0007005"/>
    <property type="project" value="BHF-UCL"/>
</dbReference>
<dbReference type="GO" id="GO:0002162">
    <property type="term" value="F:dystroglycan binding"/>
    <property type="evidence" value="ECO:0000353"/>
    <property type="project" value="UniProtKB"/>
</dbReference>
<dbReference type="GO" id="GO:0060090">
    <property type="term" value="F:molecular adaptor activity"/>
    <property type="evidence" value="ECO:0000269"/>
    <property type="project" value="DisProt"/>
</dbReference>
<dbReference type="GO" id="GO:0005198">
    <property type="term" value="F:structural molecule activity"/>
    <property type="evidence" value="ECO:0007669"/>
    <property type="project" value="InterPro"/>
</dbReference>
<dbReference type="GO" id="GO:0031625">
    <property type="term" value="F:ubiquitin protein ligase binding"/>
    <property type="evidence" value="ECO:0000353"/>
    <property type="project" value="ParkinsonsUK-UCL"/>
</dbReference>
<dbReference type="GO" id="GO:0034333">
    <property type="term" value="P:adherens junction assembly"/>
    <property type="evidence" value="ECO:0000315"/>
    <property type="project" value="BHF-UCL"/>
</dbReference>
<dbReference type="GO" id="GO:0043297">
    <property type="term" value="P:apical junction assembly"/>
    <property type="evidence" value="ECO:0000315"/>
    <property type="project" value="UniProtKB"/>
</dbReference>
<dbReference type="GO" id="GO:0048675">
    <property type="term" value="P:axon extension"/>
    <property type="evidence" value="ECO:0007669"/>
    <property type="project" value="Ensembl"/>
</dbReference>
<dbReference type="GO" id="GO:0007155">
    <property type="term" value="P:cell adhesion"/>
    <property type="evidence" value="ECO:0000318"/>
    <property type="project" value="GO_Central"/>
</dbReference>
<dbReference type="GO" id="GO:0007160">
    <property type="term" value="P:cell-matrix adhesion"/>
    <property type="evidence" value="ECO:0000304"/>
    <property type="project" value="BHF-UCL"/>
</dbReference>
<dbReference type="GO" id="GO:0090136">
    <property type="term" value="P:epithelial cell-cell adhesion"/>
    <property type="evidence" value="ECO:0000315"/>
    <property type="project" value="BHF-UCL"/>
</dbReference>
<dbReference type="GO" id="GO:0030032">
    <property type="term" value="P:lamellipodium assembly"/>
    <property type="evidence" value="ECO:0000250"/>
    <property type="project" value="UniProtKB"/>
</dbReference>
<dbReference type="GO" id="GO:0035633">
    <property type="term" value="P:maintenance of blood-brain barrier"/>
    <property type="evidence" value="ECO:0000303"/>
    <property type="project" value="ARUK-UCL"/>
</dbReference>
<dbReference type="GO" id="GO:0002009">
    <property type="term" value="P:morphogenesis of an epithelium"/>
    <property type="evidence" value="ECO:0000315"/>
    <property type="project" value="BHF-UCL"/>
</dbReference>
<dbReference type="GO" id="GO:0030336">
    <property type="term" value="P:negative regulation of cell migration"/>
    <property type="evidence" value="ECO:0000304"/>
    <property type="project" value="UniProtKB"/>
</dbReference>
<dbReference type="GO" id="GO:0070527">
    <property type="term" value="P:platelet aggregation"/>
    <property type="evidence" value="ECO:0007001"/>
    <property type="project" value="UniProtKB"/>
</dbReference>
<dbReference type="GO" id="GO:0034394">
    <property type="term" value="P:protein localization to cell surface"/>
    <property type="evidence" value="ECO:0000315"/>
    <property type="project" value="BHF-UCL"/>
</dbReference>
<dbReference type="GO" id="GO:1903140">
    <property type="term" value="P:regulation of establishment of endothelial barrier"/>
    <property type="evidence" value="ECO:0000314"/>
    <property type="project" value="ARUK-UCL"/>
</dbReference>
<dbReference type="GO" id="GO:0051893">
    <property type="term" value="P:regulation of focal adhesion assembly"/>
    <property type="evidence" value="ECO:0000315"/>
    <property type="project" value="ARUK-UCL"/>
</dbReference>
<dbReference type="GO" id="GO:1904702">
    <property type="term" value="P:regulation of protein localization to adherens junction"/>
    <property type="evidence" value="ECO:0000315"/>
    <property type="project" value="ARUK-UCL"/>
</dbReference>
<dbReference type="DisProt" id="DP02858">
    <molecule id="P18206-2"/>
</dbReference>
<dbReference type="FunFam" id="1.20.120.230:FF:000041">
    <property type="entry name" value="Vinculin"/>
    <property type="match status" value="1"/>
</dbReference>
<dbReference type="FunFam" id="1.20.120.230:FF:000010">
    <property type="entry name" value="Vinculin a"/>
    <property type="match status" value="1"/>
</dbReference>
<dbReference type="FunFam" id="1.20.120.810:FF:000001">
    <property type="entry name" value="Vinculin a"/>
    <property type="match status" value="1"/>
</dbReference>
<dbReference type="FunFam" id="1.20.120.230:FF:000013">
    <property type="entry name" value="Vinculin b"/>
    <property type="match status" value="1"/>
</dbReference>
<dbReference type="FunFam" id="1.20.120.810:FF:000002">
    <property type="entry name" value="Vinculin b"/>
    <property type="match status" value="1"/>
</dbReference>
<dbReference type="FunFam" id="1.20.120.810:FF:000003">
    <property type="entry name" value="Vinculin b"/>
    <property type="match status" value="1"/>
</dbReference>
<dbReference type="Gene3D" id="1.20.120.230">
    <property type="entry name" value="Alpha-catenin/vinculin-like"/>
    <property type="match status" value="2"/>
</dbReference>
<dbReference type="Gene3D" id="1.20.120.810">
    <property type="entry name" value="Vinculin, Vh2 four-helix bundle"/>
    <property type="match status" value="3"/>
</dbReference>
<dbReference type="InterPro" id="IPR036723">
    <property type="entry name" value="Alpha-catenin/vinculin-like_sf"/>
</dbReference>
<dbReference type="InterPro" id="IPR017997">
    <property type="entry name" value="Vinculin"/>
</dbReference>
<dbReference type="InterPro" id="IPR006077">
    <property type="entry name" value="Vinculin/catenin"/>
</dbReference>
<dbReference type="InterPro" id="IPR000633">
    <property type="entry name" value="Vinculin_CS"/>
</dbReference>
<dbReference type="PANTHER" id="PTHR46180">
    <property type="entry name" value="VINCULIN"/>
    <property type="match status" value="1"/>
</dbReference>
<dbReference type="Pfam" id="PF01044">
    <property type="entry name" value="Vinculin"/>
    <property type="match status" value="2"/>
</dbReference>
<dbReference type="PRINTS" id="PR00806">
    <property type="entry name" value="VINCULIN"/>
</dbReference>
<dbReference type="SUPFAM" id="SSF47220">
    <property type="entry name" value="alpha-catenin/vinculin-like"/>
    <property type="match status" value="6"/>
</dbReference>
<dbReference type="PROSITE" id="PS00663">
    <property type="entry name" value="VINCULIN_1"/>
    <property type="match status" value="1"/>
</dbReference>
<dbReference type="PROSITE" id="PS00664">
    <property type="entry name" value="VINCULIN_2"/>
    <property type="match status" value="3"/>
</dbReference>